<accession>A5VVU4</accession>
<sequence length="602" mass="66895">MSTPLDHIRNFSIVAHIDHGKSTLADRLIQLTGGLDTREMKDQVLDSMDIERERGITIKAQTVRLSYKAKNGEDYVLNLIDTPGHVDFAYEVSRSLAACEGSLLVVDASQGVEAQTLANVYQAIDNNHEIVVVLNKIDLPAAEPERVKQQIEEVIGIDASDAVEISAKTGLGIEDVLEAIVNKLPAPKEGDRNAPLKAMLVDSWYDSYLGVIVLVRVIDGVLKKGQTIRMMGTGAKYPVERTGVFTPKMVQVDDLGPGELGFITASIKEVADTRVGDTITEDRRPTENMLSGFKPAQPVVFCGLFPVDAADFEDLRGAMGKLRLNDASFSFEMETSAALGFGFRCGFLGLLHLEIIQERLEREFNLDLITTAPSVVYRLNMTDGTHKELHNPADMPDVVKIASIEEPWIKATIMTPDDYLGAIMKLCQERRGIQIDLTYVGPRAMITYDLPLNEVVFDFYDRLKSISKGYASFDYNLSDYREGDLVKMSILVNEEPVDALSMLVHRSAAEKRGRALCEKLKELIPQHMFKIPIQAAIGGRIVARETISALRKDVTAKCYGGDVTRKRKLLEKQKEGKKRMRQFGKVEIPQEAFIQALKMGDD</sequence>
<keyword id="KW-0997">Cell inner membrane</keyword>
<keyword id="KW-1003">Cell membrane</keyword>
<keyword id="KW-0342">GTP-binding</keyword>
<keyword id="KW-0378">Hydrolase</keyword>
<keyword id="KW-0472">Membrane</keyword>
<keyword id="KW-0547">Nucleotide-binding</keyword>
<keyword id="KW-0648">Protein biosynthesis</keyword>
<proteinExistence type="inferred from homology"/>
<dbReference type="EC" id="3.6.5.n1" evidence="1"/>
<dbReference type="EMBL" id="CP000709">
    <property type="protein sequence ID" value="ABQ62333.1"/>
    <property type="molecule type" value="Genomic_DNA"/>
</dbReference>
<dbReference type="RefSeq" id="WP_004687034.1">
    <property type="nucleotide sequence ID" value="NC_009504.1"/>
</dbReference>
<dbReference type="SMR" id="A5VVU4"/>
<dbReference type="GeneID" id="97534913"/>
<dbReference type="KEGG" id="bov:BOV_A0979"/>
<dbReference type="HOGENOM" id="CLU_009995_3_3_5"/>
<dbReference type="PhylomeDB" id="A5VVU4"/>
<dbReference type="Proteomes" id="UP000006383">
    <property type="component" value="Chromosome II"/>
</dbReference>
<dbReference type="GO" id="GO:0005886">
    <property type="term" value="C:plasma membrane"/>
    <property type="evidence" value="ECO:0007669"/>
    <property type="project" value="UniProtKB-SubCell"/>
</dbReference>
<dbReference type="GO" id="GO:0005525">
    <property type="term" value="F:GTP binding"/>
    <property type="evidence" value="ECO:0007669"/>
    <property type="project" value="UniProtKB-UniRule"/>
</dbReference>
<dbReference type="GO" id="GO:0003924">
    <property type="term" value="F:GTPase activity"/>
    <property type="evidence" value="ECO:0007669"/>
    <property type="project" value="UniProtKB-UniRule"/>
</dbReference>
<dbReference type="GO" id="GO:0097216">
    <property type="term" value="F:guanosine tetraphosphate binding"/>
    <property type="evidence" value="ECO:0007669"/>
    <property type="project" value="UniProtKB-ARBA"/>
</dbReference>
<dbReference type="GO" id="GO:0043022">
    <property type="term" value="F:ribosome binding"/>
    <property type="evidence" value="ECO:0007669"/>
    <property type="project" value="UniProtKB-UniRule"/>
</dbReference>
<dbReference type="GO" id="GO:0003746">
    <property type="term" value="F:translation elongation factor activity"/>
    <property type="evidence" value="ECO:0007669"/>
    <property type="project" value="UniProtKB-UniRule"/>
</dbReference>
<dbReference type="GO" id="GO:0045727">
    <property type="term" value="P:positive regulation of translation"/>
    <property type="evidence" value="ECO:0007669"/>
    <property type="project" value="UniProtKB-UniRule"/>
</dbReference>
<dbReference type="CDD" id="cd03699">
    <property type="entry name" value="EF4_II"/>
    <property type="match status" value="1"/>
</dbReference>
<dbReference type="CDD" id="cd16260">
    <property type="entry name" value="EF4_III"/>
    <property type="match status" value="1"/>
</dbReference>
<dbReference type="CDD" id="cd01890">
    <property type="entry name" value="LepA"/>
    <property type="match status" value="1"/>
</dbReference>
<dbReference type="CDD" id="cd03709">
    <property type="entry name" value="lepA_C"/>
    <property type="match status" value="1"/>
</dbReference>
<dbReference type="FunFam" id="3.40.50.300:FF:000078">
    <property type="entry name" value="Elongation factor 4"/>
    <property type="match status" value="1"/>
</dbReference>
<dbReference type="FunFam" id="2.40.30.10:FF:000015">
    <property type="entry name" value="Translation factor GUF1, mitochondrial"/>
    <property type="match status" value="1"/>
</dbReference>
<dbReference type="FunFam" id="3.30.70.240:FF:000007">
    <property type="entry name" value="Translation factor GUF1, mitochondrial"/>
    <property type="match status" value="1"/>
</dbReference>
<dbReference type="FunFam" id="3.30.70.2570:FF:000001">
    <property type="entry name" value="Translation factor GUF1, mitochondrial"/>
    <property type="match status" value="1"/>
</dbReference>
<dbReference type="FunFam" id="3.30.70.870:FF:000004">
    <property type="entry name" value="Translation factor GUF1, mitochondrial"/>
    <property type="match status" value="1"/>
</dbReference>
<dbReference type="Gene3D" id="3.30.70.240">
    <property type="match status" value="1"/>
</dbReference>
<dbReference type="Gene3D" id="3.30.70.2570">
    <property type="entry name" value="Elongation factor 4, C-terminal domain"/>
    <property type="match status" value="1"/>
</dbReference>
<dbReference type="Gene3D" id="3.30.70.870">
    <property type="entry name" value="Elongation Factor G (Translational Gtpase), domain 3"/>
    <property type="match status" value="1"/>
</dbReference>
<dbReference type="Gene3D" id="3.40.50.300">
    <property type="entry name" value="P-loop containing nucleotide triphosphate hydrolases"/>
    <property type="match status" value="1"/>
</dbReference>
<dbReference type="Gene3D" id="2.40.30.10">
    <property type="entry name" value="Translation factors"/>
    <property type="match status" value="1"/>
</dbReference>
<dbReference type="HAMAP" id="MF_00071">
    <property type="entry name" value="LepA"/>
    <property type="match status" value="1"/>
</dbReference>
<dbReference type="InterPro" id="IPR006297">
    <property type="entry name" value="EF-4"/>
</dbReference>
<dbReference type="InterPro" id="IPR035647">
    <property type="entry name" value="EFG_III/V"/>
</dbReference>
<dbReference type="InterPro" id="IPR000640">
    <property type="entry name" value="EFG_V-like"/>
</dbReference>
<dbReference type="InterPro" id="IPR004161">
    <property type="entry name" value="EFTu-like_2"/>
</dbReference>
<dbReference type="InterPro" id="IPR031157">
    <property type="entry name" value="G_TR_CS"/>
</dbReference>
<dbReference type="InterPro" id="IPR038363">
    <property type="entry name" value="LepA_C_sf"/>
</dbReference>
<dbReference type="InterPro" id="IPR013842">
    <property type="entry name" value="LepA_CTD"/>
</dbReference>
<dbReference type="InterPro" id="IPR035654">
    <property type="entry name" value="LepA_IV"/>
</dbReference>
<dbReference type="InterPro" id="IPR027417">
    <property type="entry name" value="P-loop_NTPase"/>
</dbReference>
<dbReference type="InterPro" id="IPR005225">
    <property type="entry name" value="Small_GTP-bd"/>
</dbReference>
<dbReference type="InterPro" id="IPR000795">
    <property type="entry name" value="T_Tr_GTP-bd_dom"/>
</dbReference>
<dbReference type="NCBIfam" id="TIGR01393">
    <property type="entry name" value="lepA"/>
    <property type="match status" value="1"/>
</dbReference>
<dbReference type="NCBIfam" id="TIGR00231">
    <property type="entry name" value="small_GTP"/>
    <property type="match status" value="1"/>
</dbReference>
<dbReference type="PANTHER" id="PTHR43512:SF4">
    <property type="entry name" value="TRANSLATION FACTOR GUF1 HOMOLOG, CHLOROPLASTIC"/>
    <property type="match status" value="1"/>
</dbReference>
<dbReference type="PANTHER" id="PTHR43512">
    <property type="entry name" value="TRANSLATION FACTOR GUF1-RELATED"/>
    <property type="match status" value="1"/>
</dbReference>
<dbReference type="Pfam" id="PF00679">
    <property type="entry name" value="EFG_C"/>
    <property type="match status" value="1"/>
</dbReference>
<dbReference type="Pfam" id="PF00009">
    <property type="entry name" value="GTP_EFTU"/>
    <property type="match status" value="1"/>
</dbReference>
<dbReference type="Pfam" id="PF03144">
    <property type="entry name" value="GTP_EFTU_D2"/>
    <property type="match status" value="1"/>
</dbReference>
<dbReference type="Pfam" id="PF06421">
    <property type="entry name" value="LepA_C"/>
    <property type="match status" value="1"/>
</dbReference>
<dbReference type="PRINTS" id="PR00315">
    <property type="entry name" value="ELONGATNFCT"/>
</dbReference>
<dbReference type="SMART" id="SM00838">
    <property type="entry name" value="EFG_C"/>
    <property type="match status" value="1"/>
</dbReference>
<dbReference type="SUPFAM" id="SSF54980">
    <property type="entry name" value="EF-G C-terminal domain-like"/>
    <property type="match status" value="2"/>
</dbReference>
<dbReference type="SUPFAM" id="SSF52540">
    <property type="entry name" value="P-loop containing nucleoside triphosphate hydrolases"/>
    <property type="match status" value="1"/>
</dbReference>
<dbReference type="PROSITE" id="PS00301">
    <property type="entry name" value="G_TR_1"/>
    <property type="match status" value="1"/>
</dbReference>
<dbReference type="PROSITE" id="PS51722">
    <property type="entry name" value="G_TR_2"/>
    <property type="match status" value="1"/>
</dbReference>
<gene>
    <name evidence="1" type="primary">lepA</name>
    <name type="ordered locus">BOV_A0979</name>
</gene>
<evidence type="ECO:0000255" key="1">
    <source>
        <dbReference type="HAMAP-Rule" id="MF_00071"/>
    </source>
</evidence>
<comment type="function">
    <text evidence="1">Required for accurate and efficient protein synthesis under certain stress conditions. May act as a fidelity factor of the translation reaction, by catalyzing a one-codon backward translocation of tRNAs on improperly translocated ribosomes. Back-translocation proceeds from a post-translocation (POST) complex to a pre-translocation (PRE) complex, thus giving elongation factor G a second chance to translocate the tRNAs correctly. Binds to ribosomes in a GTP-dependent manner.</text>
</comment>
<comment type="catalytic activity">
    <reaction evidence="1">
        <text>GTP + H2O = GDP + phosphate + H(+)</text>
        <dbReference type="Rhea" id="RHEA:19669"/>
        <dbReference type="ChEBI" id="CHEBI:15377"/>
        <dbReference type="ChEBI" id="CHEBI:15378"/>
        <dbReference type="ChEBI" id="CHEBI:37565"/>
        <dbReference type="ChEBI" id="CHEBI:43474"/>
        <dbReference type="ChEBI" id="CHEBI:58189"/>
        <dbReference type="EC" id="3.6.5.n1"/>
    </reaction>
</comment>
<comment type="subcellular location">
    <subcellularLocation>
        <location evidence="1">Cell inner membrane</location>
        <topology evidence="1">Peripheral membrane protein</topology>
        <orientation evidence="1">Cytoplasmic side</orientation>
    </subcellularLocation>
</comment>
<comment type="similarity">
    <text evidence="1">Belongs to the TRAFAC class translation factor GTPase superfamily. Classic translation factor GTPase family. LepA subfamily.</text>
</comment>
<protein>
    <recommendedName>
        <fullName evidence="1">Elongation factor 4</fullName>
        <shortName evidence="1">EF-4</shortName>
        <ecNumber evidence="1">3.6.5.n1</ecNumber>
    </recommendedName>
    <alternativeName>
        <fullName evidence="1">Ribosomal back-translocase LepA</fullName>
    </alternativeName>
</protein>
<name>LEPA_BRUO2</name>
<reference key="1">
    <citation type="journal article" date="2009" name="PLoS ONE">
        <title>Genome degradation in Brucella ovis corresponds with narrowing of its host range and tissue tropism.</title>
        <authorList>
            <person name="Tsolis R.M."/>
            <person name="Seshadri R."/>
            <person name="Santos R.L."/>
            <person name="Sangari F.J."/>
            <person name="Lobo J.M."/>
            <person name="de Jong M.F."/>
            <person name="Ren Q."/>
            <person name="Myers G."/>
            <person name="Brinkac L.M."/>
            <person name="Nelson W.C."/>
            <person name="Deboy R.T."/>
            <person name="Angiuoli S."/>
            <person name="Khouri H."/>
            <person name="Dimitrov G."/>
            <person name="Robinson J.R."/>
            <person name="Mulligan S."/>
            <person name="Walker R.L."/>
            <person name="Elzer P.E."/>
            <person name="Hassan K.A."/>
            <person name="Paulsen I.T."/>
        </authorList>
    </citation>
    <scope>NUCLEOTIDE SEQUENCE [LARGE SCALE GENOMIC DNA]</scope>
    <source>
        <strain>ATCC 25840 / 63/290 / NCTC 10512</strain>
    </source>
</reference>
<organism>
    <name type="scientific">Brucella ovis (strain ATCC 25840 / 63/290 / NCTC 10512)</name>
    <dbReference type="NCBI Taxonomy" id="444178"/>
    <lineage>
        <taxon>Bacteria</taxon>
        <taxon>Pseudomonadati</taxon>
        <taxon>Pseudomonadota</taxon>
        <taxon>Alphaproteobacteria</taxon>
        <taxon>Hyphomicrobiales</taxon>
        <taxon>Brucellaceae</taxon>
        <taxon>Brucella/Ochrobactrum group</taxon>
        <taxon>Brucella</taxon>
    </lineage>
</organism>
<feature type="chain" id="PRO_1000031970" description="Elongation factor 4">
    <location>
        <begin position="1"/>
        <end position="602"/>
    </location>
</feature>
<feature type="domain" description="tr-type G">
    <location>
        <begin position="6"/>
        <end position="188"/>
    </location>
</feature>
<feature type="binding site" evidence="1">
    <location>
        <begin position="18"/>
        <end position="23"/>
    </location>
    <ligand>
        <name>GTP</name>
        <dbReference type="ChEBI" id="CHEBI:37565"/>
    </ligand>
</feature>
<feature type="binding site" evidence="1">
    <location>
        <begin position="135"/>
        <end position="138"/>
    </location>
    <ligand>
        <name>GTP</name>
        <dbReference type="ChEBI" id="CHEBI:37565"/>
    </ligand>
</feature>